<keyword id="KW-0325">Glycoprotein</keyword>
<keyword id="KW-0472">Membrane</keyword>
<keyword id="KW-0812">Transmembrane</keyword>
<keyword id="KW-1133">Transmembrane helix</keyword>
<keyword id="KW-0813">Transport</keyword>
<comment type="subcellular location">
    <subcellularLocation>
        <location evidence="1">Membrane</location>
        <topology evidence="1">Multi-pass membrane protein</topology>
    </subcellularLocation>
</comment>
<comment type="similarity">
    <text evidence="5">Belongs to the major facilitator superfamily. Sugar transporter (TC 2.A.1.1) family.</text>
</comment>
<comment type="caution">
    <text evidence="3">EcdB, ecdC, ecdD, ecdE and ecdF have previously been identified as being part of the echinocandin B biosynthetic cluster, but it was later realized that this was due to a genome misassembly and these 5 proteins are now considered as artifacts and not part of the cluster.</text>
</comment>
<organism>
    <name type="scientific">Aspergillus rugulosus</name>
    <name type="common">Emericella rugulosa</name>
    <dbReference type="NCBI Taxonomy" id="41736"/>
    <lineage>
        <taxon>Eukaryota</taxon>
        <taxon>Fungi</taxon>
        <taxon>Dikarya</taxon>
        <taxon>Ascomycota</taxon>
        <taxon>Pezizomycotina</taxon>
        <taxon>Eurotiomycetes</taxon>
        <taxon>Eurotiomycetidae</taxon>
        <taxon>Eurotiales</taxon>
        <taxon>Aspergillaceae</taxon>
        <taxon>Aspergillus</taxon>
        <taxon>Aspergillus subgen. Nidulantes</taxon>
    </lineage>
</organism>
<dbReference type="EMBL" id="JX421684">
    <property type="protein sequence ID" value="AFT91387.1"/>
    <property type="molecule type" value="Genomic_DNA"/>
</dbReference>
<dbReference type="SMR" id="K0E3U9"/>
<dbReference type="GlyCosmos" id="K0E3U9">
    <property type="glycosylation" value="4 sites, No reported glycans"/>
</dbReference>
<dbReference type="GO" id="GO:0016020">
    <property type="term" value="C:membrane"/>
    <property type="evidence" value="ECO:0007669"/>
    <property type="project" value="UniProtKB-SubCell"/>
</dbReference>
<dbReference type="GO" id="GO:0005351">
    <property type="term" value="F:carbohydrate:proton symporter activity"/>
    <property type="evidence" value="ECO:0007669"/>
    <property type="project" value="TreeGrafter"/>
</dbReference>
<dbReference type="CDD" id="cd17356">
    <property type="entry name" value="MFS_HXT"/>
    <property type="match status" value="1"/>
</dbReference>
<dbReference type="FunFam" id="1.20.1250.20:FF:000115">
    <property type="entry name" value="High-affinity glucose transporter"/>
    <property type="match status" value="1"/>
</dbReference>
<dbReference type="Gene3D" id="1.20.1250.20">
    <property type="entry name" value="MFS general substrate transporter like domains"/>
    <property type="match status" value="1"/>
</dbReference>
<dbReference type="InterPro" id="IPR020846">
    <property type="entry name" value="MFS_dom"/>
</dbReference>
<dbReference type="InterPro" id="IPR005828">
    <property type="entry name" value="MFS_sugar_transport-like"/>
</dbReference>
<dbReference type="InterPro" id="IPR050360">
    <property type="entry name" value="MFS_Sugar_Transporters"/>
</dbReference>
<dbReference type="InterPro" id="IPR036259">
    <property type="entry name" value="MFS_trans_sf"/>
</dbReference>
<dbReference type="InterPro" id="IPR003663">
    <property type="entry name" value="Sugar/inositol_transpt"/>
</dbReference>
<dbReference type="InterPro" id="IPR005829">
    <property type="entry name" value="Sugar_transporter_CS"/>
</dbReference>
<dbReference type="NCBIfam" id="TIGR00879">
    <property type="entry name" value="SP"/>
    <property type="match status" value="1"/>
</dbReference>
<dbReference type="PANTHER" id="PTHR48022:SF17">
    <property type="entry name" value="HEXOSE TRANSPORTER"/>
    <property type="match status" value="1"/>
</dbReference>
<dbReference type="PANTHER" id="PTHR48022">
    <property type="entry name" value="PLASTIDIC GLUCOSE TRANSPORTER 4"/>
    <property type="match status" value="1"/>
</dbReference>
<dbReference type="Pfam" id="PF00083">
    <property type="entry name" value="Sugar_tr"/>
    <property type="match status" value="1"/>
</dbReference>
<dbReference type="PRINTS" id="PR00171">
    <property type="entry name" value="SUGRTRNSPORT"/>
</dbReference>
<dbReference type="SUPFAM" id="SSF103473">
    <property type="entry name" value="MFS general substrate transporter"/>
    <property type="match status" value="1"/>
</dbReference>
<dbReference type="PROSITE" id="PS50850">
    <property type="entry name" value="MFS"/>
    <property type="match status" value="1"/>
</dbReference>
<dbReference type="PROSITE" id="PS00216">
    <property type="entry name" value="SUGAR_TRANSPORT_1"/>
    <property type="match status" value="1"/>
</dbReference>
<dbReference type="PROSITE" id="PS00217">
    <property type="entry name" value="SUGAR_TRANSPORT_2"/>
    <property type="match status" value="1"/>
</dbReference>
<feature type="chain" id="PRO_0000443829" description="Major facilitator-type transporter ecdD">
    <location>
        <begin position="1"/>
        <end position="541"/>
    </location>
</feature>
<feature type="transmembrane region" description="Helical" evidence="1">
    <location>
        <begin position="15"/>
        <end position="35"/>
    </location>
</feature>
<feature type="transmembrane region" description="Helical" evidence="1">
    <location>
        <begin position="72"/>
        <end position="92"/>
    </location>
</feature>
<feature type="transmembrane region" description="Helical" evidence="1">
    <location>
        <begin position="106"/>
        <end position="126"/>
    </location>
</feature>
<feature type="transmembrane region" description="Helical" evidence="1">
    <location>
        <begin position="129"/>
        <end position="149"/>
    </location>
</feature>
<feature type="transmembrane region" description="Helical" evidence="1">
    <location>
        <begin position="156"/>
        <end position="176"/>
    </location>
</feature>
<feature type="transmembrane region" description="Helical" evidence="1">
    <location>
        <begin position="191"/>
        <end position="211"/>
    </location>
</feature>
<feature type="transmembrane region" description="Helical" evidence="1">
    <location>
        <begin position="277"/>
        <end position="297"/>
    </location>
</feature>
<feature type="transmembrane region" description="Helical" evidence="1">
    <location>
        <begin position="313"/>
        <end position="333"/>
    </location>
</feature>
<feature type="transmembrane region" description="Helical" evidence="1">
    <location>
        <begin position="340"/>
        <end position="360"/>
    </location>
</feature>
<feature type="transmembrane region" description="Helical" evidence="1">
    <location>
        <begin position="384"/>
        <end position="404"/>
    </location>
</feature>
<feature type="transmembrane region" description="Helical" evidence="1">
    <location>
        <begin position="418"/>
        <end position="440"/>
    </location>
</feature>
<feature type="transmembrane region" description="Helical" evidence="1">
    <location>
        <begin position="454"/>
        <end position="474"/>
    </location>
</feature>
<feature type="glycosylation site" description="N-linked (GlcNAc...) asparagine" evidence="2">
    <location>
        <position position="64"/>
    </location>
</feature>
<feature type="glycosylation site" description="N-linked (GlcNAc...) asparagine" evidence="2">
    <location>
        <position position="178"/>
    </location>
</feature>
<feature type="glycosylation site" description="N-linked (GlcNAc...) asparagine" evidence="2">
    <location>
        <position position="184"/>
    </location>
</feature>
<feature type="glycosylation site" description="N-linked (GlcNAc...) asparagine" evidence="2">
    <location>
        <position position="253"/>
    </location>
</feature>
<proteinExistence type="inferred from homology"/>
<accession>K0E3U9</accession>
<gene>
    <name evidence="4" type="primary">ecdD</name>
</gene>
<protein>
    <recommendedName>
        <fullName evidence="4">Major facilitator-type transporter ecdD</fullName>
    </recommendedName>
</protein>
<sequence length="541" mass="58636">MGLLFKQPEGTAGKAWPAILISGFVAFGGILFGYDTGTISGILAMPYWARTFSTGYRDSTGQLNVTSSQSSAIVSILSAGTFFGALGASPMGDIIGRRWGLIASNGIFVLGVVLQTIATSIPPFLAGRFFAGLGVGLISALVPLYQSETAPKWIRGFIVGAYQFAITVGLLLASVLNNATHHRNDSGSYRIPIAVQFAWSIILVGGMLILPETPRYLVKKDNIQAAARSLSKLRRLPEDHAAIREELAEIQANHSFEMSLGRSGYMECFQGNLLKRLVTGCLLQALQQLSGINFIMYYGTQFFKNSGFQNEFVITLITNCVNVGSTLPGLYAIDKWGRRPVLLTGAIGMAVSQLLVAVLGTTTTGQDSRGNIIVHDAAAQKAAIAFICLYIFFFAASWGPSAWVITGEIFPLKTRAKSLSMTTATNWLLNWALSFSTPYLVNYGDGNANLQSKIFFIWFGCCFLCIGFVHFMIYETKGLTLEEVDELYMEVDSARDSVKWQPRGVARGEKEAHGAETDFAVETAKGASEQQEVIGDAGRSL</sequence>
<evidence type="ECO:0000255" key="1"/>
<evidence type="ECO:0000255" key="2">
    <source>
        <dbReference type="PROSITE-ProRule" id="PRU00498"/>
    </source>
</evidence>
<evidence type="ECO:0000269" key="3">
    <source>
    </source>
</evidence>
<evidence type="ECO:0000303" key="4">
    <source>
    </source>
</evidence>
<evidence type="ECO:0000305" key="5"/>
<reference key="1">
    <citation type="journal article" date="2012" name="J. Am. Chem. Soc.">
        <title>Identification and characterization of the echinocandin B biosynthetic gene cluster from Emericella rugulosa NRRL 11440.</title>
        <authorList>
            <person name="Cacho R.A."/>
            <person name="Jiang W."/>
            <person name="Chooi Y.H."/>
            <person name="Walsh C.T."/>
            <person name="Tang Y."/>
        </authorList>
    </citation>
    <scope>NUCLEOTIDE SEQUENCE [GENOMIC DNA]</scope>
    <source>
        <strain>ATCC 58397 / NRRL 11440</strain>
    </source>
</reference>
<reference key="2">
    <citation type="journal article" date="2016" name="BMC Genomics">
        <title>Echinocandin B biosynthesis: a biosynthetic cluster from Aspergillus nidulans NRRL 8112 and reassembly of the subclusters Ecd and Hty from Aspergillus pachycristatus NRRL 11440 reveals a single coherent gene cluster.</title>
        <authorList>
            <person name="Huettel W."/>
            <person name="Youssar L."/>
            <person name="Gruening B.A."/>
            <person name="Guenther S."/>
            <person name="Hugentobler K.G."/>
        </authorList>
    </citation>
    <scope>CLUSTER REVISION</scope>
</reference>
<name>ECDD_ASPRU</name>